<evidence type="ECO:0000255" key="1">
    <source>
        <dbReference type="HAMAP-Rule" id="MF_01854"/>
    </source>
</evidence>
<protein>
    <recommendedName>
        <fullName evidence="1">Fructose-1,6-bisphosphatase class 3</fullName>
        <shortName evidence="1">FBPase class 3</shortName>
        <ecNumber evidence="1">3.1.3.11</ecNumber>
    </recommendedName>
    <alternativeName>
        <fullName evidence="1">D-fructose-1,6-bisphosphate 1-phosphohydrolase class 3</fullName>
    </alternativeName>
</protein>
<sequence>MKTIDMKYLRLLAKEYPTIAKTATEIINLEAIMNLPKGTEHFLSDVHGEYSAFEQVLRNGSGVVKRKIRDIFGAELDDAEINSLSTLIYYPEEKMDLIASETEDLHAWYRTTLFRLIELCQYVASKYTRSKVRKAMPEDFAYILEELLHENYNEDDKKLYYEEILQHIISLGRAEEFISALSLLIQQLVVDHLHIVGDVYDRGPYPDKIMDTLMNYHSLDFQWGNHDILWMGAASGSRVCAANVIRISARYLNLDILEDSYGISLRPLALFADEVYKDDPCTYFQPKNEENINYSNAEITQIARMHKAISIIQFKLEGEIIKRRKEFDMNHRLLLQFIDYKKGTIQLKGKEYQLLDNHFPTINPENPYELTDAERELIGKITAAFKNCRRLQKHVQFLYSKGSMFLTYNGNLLYHGCIPLHKDGTFMEMKLRGEKYAGRALLEQFEILTREAYVRPTGTKEKKYACDIVWYLWTGAISSLFGKSEMTTFERYFVAEKETHTEEKNPYYKLRNNELICKQILEEFELDGECGHIINGHTPVKEGKGESPIKASGKMLVIDGGFAKAYHKETNLAGYTLLFNSYGLQLVSHQPFTTKEDAIKNETDILSTRQVIEMEINRKRVRDTDIGAKLSEQAEDLKLLLDAYRNGLLHENR</sequence>
<reference key="1">
    <citation type="journal article" date="2001" name="Science">
        <title>Comparative genomics of Listeria species.</title>
        <authorList>
            <person name="Glaser P."/>
            <person name="Frangeul L."/>
            <person name="Buchrieser C."/>
            <person name="Rusniok C."/>
            <person name="Amend A."/>
            <person name="Baquero F."/>
            <person name="Berche P."/>
            <person name="Bloecker H."/>
            <person name="Brandt P."/>
            <person name="Chakraborty T."/>
            <person name="Charbit A."/>
            <person name="Chetouani F."/>
            <person name="Couve E."/>
            <person name="de Daruvar A."/>
            <person name="Dehoux P."/>
            <person name="Domann E."/>
            <person name="Dominguez-Bernal G."/>
            <person name="Duchaud E."/>
            <person name="Durant L."/>
            <person name="Dussurget O."/>
            <person name="Entian K.-D."/>
            <person name="Fsihi H."/>
            <person name="Garcia-del Portillo F."/>
            <person name="Garrido P."/>
            <person name="Gautier L."/>
            <person name="Goebel W."/>
            <person name="Gomez-Lopez N."/>
            <person name="Hain T."/>
            <person name="Hauf J."/>
            <person name="Jackson D."/>
            <person name="Jones L.-M."/>
            <person name="Kaerst U."/>
            <person name="Kreft J."/>
            <person name="Kuhn M."/>
            <person name="Kunst F."/>
            <person name="Kurapkat G."/>
            <person name="Madueno E."/>
            <person name="Maitournam A."/>
            <person name="Mata Vicente J."/>
            <person name="Ng E."/>
            <person name="Nedjari H."/>
            <person name="Nordsiek G."/>
            <person name="Novella S."/>
            <person name="de Pablos B."/>
            <person name="Perez-Diaz J.-C."/>
            <person name="Purcell R."/>
            <person name="Remmel B."/>
            <person name="Rose M."/>
            <person name="Schlueter T."/>
            <person name="Simoes N."/>
            <person name="Tierrez A."/>
            <person name="Vazquez-Boland J.-A."/>
            <person name="Voss H."/>
            <person name="Wehland J."/>
            <person name="Cossart P."/>
        </authorList>
    </citation>
    <scope>NUCLEOTIDE SEQUENCE [LARGE SCALE GENOMIC DNA]</scope>
    <source>
        <strain>ATCC BAA-679 / EGD-e</strain>
    </source>
</reference>
<keyword id="KW-0119">Carbohydrate metabolism</keyword>
<keyword id="KW-0378">Hydrolase</keyword>
<keyword id="KW-0464">Manganese</keyword>
<keyword id="KW-1185">Reference proteome</keyword>
<proteinExistence type="inferred from homology"/>
<name>F16PC_LISMO</name>
<accession>Q8Y8R5</accession>
<organism>
    <name type="scientific">Listeria monocytogenes serovar 1/2a (strain ATCC BAA-679 / EGD-e)</name>
    <dbReference type="NCBI Taxonomy" id="169963"/>
    <lineage>
        <taxon>Bacteria</taxon>
        <taxon>Bacillati</taxon>
        <taxon>Bacillota</taxon>
        <taxon>Bacilli</taxon>
        <taxon>Bacillales</taxon>
        <taxon>Listeriaceae</taxon>
        <taxon>Listeria</taxon>
    </lineage>
</organism>
<gene>
    <name evidence="1" type="primary">fbp</name>
    <name type="ordered locus">lmo0830</name>
</gene>
<feature type="chain" id="PRO_0000363101" description="Fructose-1,6-bisphosphatase class 3">
    <location>
        <begin position="1"/>
        <end position="653"/>
    </location>
</feature>
<comment type="catalytic activity">
    <reaction evidence="1">
        <text>beta-D-fructose 1,6-bisphosphate + H2O = beta-D-fructose 6-phosphate + phosphate</text>
        <dbReference type="Rhea" id="RHEA:11064"/>
        <dbReference type="ChEBI" id="CHEBI:15377"/>
        <dbReference type="ChEBI" id="CHEBI:32966"/>
        <dbReference type="ChEBI" id="CHEBI:43474"/>
        <dbReference type="ChEBI" id="CHEBI:57634"/>
        <dbReference type="EC" id="3.1.3.11"/>
    </reaction>
</comment>
<comment type="cofactor">
    <cofactor evidence="1">
        <name>Mn(2+)</name>
        <dbReference type="ChEBI" id="CHEBI:29035"/>
    </cofactor>
</comment>
<comment type="pathway">
    <text evidence="1">Carbohydrate biosynthesis; gluconeogenesis.</text>
</comment>
<comment type="similarity">
    <text evidence="1">Belongs to the FBPase class 3 family.</text>
</comment>
<dbReference type="EC" id="3.1.3.11" evidence="1"/>
<dbReference type="EMBL" id="AL591976">
    <property type="protein sequence ID" value="CAC98908.1"/>
    <property type="molecule type" value="Genomic_DNA"/>
</dbReference>
<dbReference type="PIR" id="AF1178">
    <property type="entry name" value="AF1178"/>
</dbReference>
<dbReference type="RefSeq" id="NP_464357.1">
    <property type="nucleotide sequence ID" value="NC_003210.1"/>
</dbReference>
<dbReference type="RefSeq" id="WP_010989588.1">
    <property type="nucleotide sequence ID" value="NZ_CP149495.1"/>
</dbReference>
<dbReference type="STRING" id="169963.gene:17593481"/>
<dbReference type="PaxDb" id="169963-lmo0830"/>
<dbReference type="EnsemblBacteria" id="CAC98908">
    <property type="protein sequence ID" value="CAC98908"/>
    <property type="gene ID" value="CAC98908"/>
</dbReference>
<dbReference type="GeneID" id="985361"/>
<dbReference type="KEGG" id="lmo:lmo0830"/>
<dbReference type="PATRIC" id="fig|169963.11.peg.853"/>
<dbReference type="eggNOG" id="COG3855">
    <property type="taxonomic scope" value="Bacteria"/>
</dbReference>
<dbReference type="HOGENOM" id="CLU_028392_2_0_9"/>
<dbReference type="OrthoDB" id="9779903at2"/>
<dbReference type="PhylomeDB" id="Q8Y8R5"/>
<dbReference type="BioCyc" id="LMON169963:LMO0830-MONOMER"/>
<dbReference type="UniPathway" id="UPA00138"/>
<dbReference type="Proteomes" id="UP000000817">
    <property type="component" value="Chromosome"/>
</dbReference>
<dbReference type="GO" id="GO:0042132">
    <property type="term" value="F:fructose 1,6-bisphosphate 1-phosphatase activity"/>
    <property type="evidence" value="ECO:0007669"/>
    <property type="project" value="UniProtKB-UniRule"/>
</dbReference>
<dbReference type="GO" id="GO:0006094">
    <property type="term" value="P:gluconeogenesis"/>
    <property type="evidence" value="ECO:0007669"/>
    <property type="project" value="UniProtKB-UniRule"/>
</dbReference>
<dbReference type="Gene3D" id="3.60.21.10">
    <property type="match status" value="1"/>
</dbReference>
<dbReference type="HAMAP" id="MF_01854">
    <property type="entry name" value="FBPase_class3"/>
    <property type="match status" value="1"/>
</dbReference>
<dbReference type="InterPro" id="IPR009164">
    <property type="entry name" value="FBPtase_class3"/>
</dbReference>
<dbReference type="InterPro" id="IPR029052">
    <property type="entry name" value="Metallo-depent_PP-like"/>
</dbReference>
<dbReference type="Pfam" id="PF06874">
    <property type="entry name" value="FBPase_2"/>
    <property type="match status" value="1"/>
</dbReference>
<dbReference type="PIRSF" id="PIRSF000906">
    <property type="entry name" value="FBPtase_Bacill"/>
    <property type="match status" value="1"/>
</dbReference>
<dbReference type="SUPFAM" id="SSF56300">
    <property type="entry name" value="Metallo-dependent phosphatases"/>
    <property type="match status" value="1"/>
</dbReference>